<gene>
    <name type="primary">Cstf1</name>
</gene>
<keyword id="KW-0507">mRNA processing</keyword>
<keyword id="KW-0539">Nucleus</keyword>
<keyword id="KW-1185">Reference proteome</keyword>
<keyword id="KW-0677">Repeat</keyword>
<keyword id="KW-0853">WD repeat</keyword>
<name>CSTF1_MOUSE</name>
<organism>
    <name type="scientific">Mus musculus</name>
    <name type="common">Mouse</name>
    <dbReference type="NCBI Taxonomy" id="10090"/>
    <lineage>
        <taxon>Eukaryota</taxon>
        <taxon>Metazoa</taxon>
        <taxon>Chordata</taxon>
        <taxon>Craniata</taxon>
        <taxon>Vertebrata</taxon>
        <taxon>Euteleostomi</taxon>
        <taxon>Mammalia</taxon>
        <taxon>Eutheria</taxon>
        <taxon>Euarchontoglires</taxon>
        <taxon>Glires</taxon>
        <taxon>Rodentia</taxon>
        <taxon>Myomorpha</taxon>
        <taxon>Muroidea</taxon>
        <taxon>Muridae</taxon>
        <taxon>Murinae</taxon>
        <taxon>Mus</taxon>
        <taxon>Mus</taxon>
    </lineage>
</organism>
<dbReference type="EMBL" id="AK011943">
    <property type="protein sequence ID" value="BAB27929.1"/>
    <property type="status" value="ALT_FRAME"/>
    <property type="molecule type" value="mRNA"/>
</dbReference>
<dbReference type="EMBL" id="AK050686">
    <property type="protein sequence ID" value="BAC34379.1"/>
    <property type="molecule type" value="mRNA"/>
</dbReference>
<dbReference type="EMBL" id="AK078667">
    <property type="protein sequence ID" value="BAC37353.1"/>
    <property type="molecule type" value="mRNA"/>
</dbReference>
<dbReference type="EMBL" id="AK145001">
    <property type="protein sequence ID" value="BAE26180.1"/>
    <property type="molecule type" value="mRNA"/>
</dbReference>
<dbReference type="EMBL" id="BC003440">
    <property type="protein sequence ID" value="AAH03440.1"/>
    <property type="molecule type" value="mRNA"/>
</dbReference>
<dbReference type="CCDS" id="CCDS17130.1"/>
<dbReference type="RefSeq" id="NP_001402803.1">
    <property type="nucleotide sequence ID" value="NM_001415874.1"/>
</dbReference>
<dbReference type="RefSeq" id="NP_001402804.1">
    <property type="nucleotide sequence ID" value="NM_001415875.1"/>
</dbReference>
<dbReference type="RefSeq" id="NP_077161.1">
    <property type="nucleotide sequence ID" value="NM_024199.3"/>
</dbReference>
<dbReference type="RefSeq" id="XP_006500135.2">
    <property type="nucleotide sequence ID" value="XM_006500072.3"/>
</dbReference>
<dbReference type="SMR" id="Q99LC2"/>
<dbReference type="BioGRID" id="212117">
    <property type="interactions" value="8"/>
</dbReference>
<dbReference type="FunCoup" id="Q99LC2">
    <property type="interactions" value="4228"/>
</dbReference>
<dbReference type="STRING" id="10090.ENSMUSP00000112076"/>
<dbReference type="GlyGen" id="Q99LC2">
    <property type="glycosylation" value="1 site, 1 N-linked glycan (1 site)"/>
</dbReference>
<dbReference type="iPTMnet" id="Q99LC2"/>
<dbReference type="PhosphoSitePlus" id="Q99LC2"/>
<dbReference type="SwissPalm" id="Q99LC2"/>
<dbReference type="PaxDb" id="10090-ENSMUSP00000112076"/>
<dbReference type="PeptideAtlas" id="Q99LC2"/>
<dbReference type="ProteomicsDB" id="277904"/>
<dbReference type="Pumba" id="Q99LC2"/>
<dbReference type="Antibodypedia" id="28869">
    <property type="antibodies" value="247 antibodies from 31 providers"/>
</dbReference>
<dbReference type="DNASU" id="67337"/>
<dbReference type="Ensembl" id="ENSMUST00000116375.2">
    <property type="protein sequence ID" value="ENSMUSP00000112076.2"/>
    <property type="gene ID" value="ENSMUSG00000027498.15"/>
</dbReference>
<dbReference type="GeneID" id="67337"/>
<dbReference type="KEGG" id="mmu:67337"/>
<dbReference type="UCSC" id="uc008ocp.1">
    <property type="organism name" value="mouse"/>
</dbReference>
<dbReference type="AGR" id="MGI:1914587"/>
<dbReference type="CTD" id="1477"/>
<dbReference type="MGI" id="MGI:1914587">
    <property type="gene designation" value="Cstf1"/>
</dbReference>
<dbReference type="VEuPathDB" id="HostDB:ENSMUSG00000027498"/>
<dbReference type="eggNOG" id="KOG0640">
    <property type="taxonomic scope" value="Eukaryota"/>
</dbReference>
<dbReference type="GeneTree" id="ENSGT00910000144253"/>
<dbReference type="HOGENOM" id="CLU_041619_0_0_1"/>
<dbReference type="InParanoid" id="Q99LC2"/>
<dbReference type="OMA" id="HTEDYVM"/>
<dbReference type="OrthoDB" id="14421at2759"/>
<dbReference type="PhylomeDB" id="Q99LC2"/>
<dbReference type="TreeFam" id="TF314234"/>
<dbReference type="Reactome" id="R-MMU-72187">
    <property type="pathway name" value="mRNA 3'-end processing"/>
</dbReference>
<dbReference type="Reactome" id="R-MMU-72203">
    <property type="pathway name" value="Processing of Capped Intron-Containing Pre-mRNA"/>
</dbReference>
<dbReference type="Reactome" id="R-MMU-73856">
    <property type="pathway name" value="RNA Polymerase II Transcription Termination"/>
</dbReference>
<dbReference type="Reactome" id="R-MMU-77595">
    <property type="pathway name" value="Processing of Intronless Pre-mRNAs"/>
</dbReference>
<dbReference type="BioGRID-ORCS" id="67337">
    <property type="hits" value="26 hits in 83 CRISPR screens"/>
</dbReference>
<dbReference type="PRO" id="PR:Q99LC2"/>
<dbReference type="Proteomes" id="UP000000589">
    <property type="component" value="Chromosome 2"/>
</dbReference>
<dbReference type="RNAct" id="Q99LC2">
    <property type="molecule type" value="protein"/>
</dbReference>
<dbReference type="Bgee" id="ENSMUSG00000027498">
    <property type="expression patterns" value="Expressed in spermatid and 240 other cell types or tissues"/>
</dbReference>
<dbReference type="ExpressionAtlas" id="Q99LC2">
    <property type="expression patterns" value="baseline and differential"/>
</dbReference>
<dbReference type="GO" id="GO:0005848">
    <property type="term" value="C:mRNA cleavage stimulating factor complex"/>
    <property type="evidence" value="ECO:0007669"/>
    <property type="project" value="InterPro"/>
</dbReference>
<dbReference type="GO" id="GO:0005654">
    <property type="term" value="C:nucleoplasm"/>
    <property type="evidence" value="ECO:0007669"/>
    <property type="project" value="Ensembl"/>
</dbReference>
<dbReference type="GO" id="GO:0031124">
    <property type="term" value="P:mRNA 3'-end processing"/>
    <property type="evidence" value="ECO:0007669"/>
    <property type="project" value="InterPro"/>
</dbReference>
<dbReference type="CDD" id="cd00200">
    <property type="entry name" value="WD40"/>
    <property type="match status" value="1"/>
</dbReference>
<dbReference type="FunFam" id="1.20.960.50:FF:000001">
    <property type="entry name" value="Cleavage stimulation factor subunit 1"/>
    <property type="match status" value="1"/>
</dbReference>
<dbReference type="FunFam" id="2.130.10.10:FF:000064">
    <property type="entry name" value="Cleavage stimulation factor subunit 1"/>
    <property type="match status" value="1"/>
</dbReference>
<dbReference type="FunFam" id="2.130.10.10:FF:000089">
    <property type="entry name" value="Cleavage stimulation factor subunit 1"/>
    <property type="match status" value="1"/>
</dbReference>
<dbReference type="Gene3D" id="1.20.960.50">
    <property type="entry name" value="Cleavage stimulation factor subunit 1, dimerisation domain"/>
    <property type="match status" value="1"/>
</dbReference>
<dbReference type="Gene3D" id="2.130.10.10">
    <property type="entry name" value="YVTN repeat-like/Quinoprotein amine dehydrogenase"/>
    <property type="match status" value="2"/>
</dbReference>
<dbReference type="InterPro" id="IPR044633">
    <property type="entry name" value="CstF1-like"/>
</dbReference>
<dbReference type="InterPro" id="IPR032028">
    <property type="entry name" value="CSTF1_dimer"/>
</dbReference>
<dbReference type="InterPro" id="IPR038184">
    <property type="entry name" value="CSTF1_dimer_sf"/>
</dbReference>
<dbReference type="InterPro" id="IPR015943">
    <property type="entry name" value="WD40/YVTN_repeat-like_dom_sf"/>
</dbReference>
<dbReference type="InterPro" id="IPR019775">
    <property type="entry name" value="WD40_repeat_CS"/>
</dbReference>
<dbReference type="InterPro" id="IPR036322">
    <property type="entry name" value="WD40_repeat_dom_sf"/>
</dbReference>
<dbReference type="InterPro" id="IPR001680">
    <property type="entry name" value="WD40_rpt"/>
</dbReference>
<dbReference type="PANTHER" id="PTHR44133">
    <property type="entry name" value="CLEAVAGE STIMULATION FACTOR SUBUNIT 1"/>
    <property type="match status" value="1"/>
</dbReference>
<dbReference type="PANTHER" id="PTHR44133:SF2">
    <property type="entry name" value="CLEAVAGE STIMULATION FACTOR SUBUNIT 1"/>
    <property type="match status" value="1"/>
</dbReference>
<dbReference type="Pfam" id="PF16699">
    <property type="entry name" value="CSTF1_dimer"/>
    <property type="match status" value="1"/>
</dbReference>
<dbReference type="Pfam" id="PF00400">
    <property type="entry name" value="WD40"/>
    <property type="match status" value="6"/>
</dbReference>
<dbReference type="SMART" id="SM00320">
    <property type="entry name" value="WD40"/>
    <property type="match status" value="6"/>
</dbReference>
<dbReference type="SUPFAM" id="SSF50978">
    <property type="entry name" value="WD40 repeat-like"/>
    <property type="match status" value="1"/>
</dbReference>
<dbReference type="PROSITE" id="PS00678">
    <property type="entry name" value="WD_REPEATS_1"/>
    <property type="match status" value="1"/>
</dbReference>
<dbReference type="PROSITE" id="PS50082">
    <property type="entry name" value="WD_REPEATS_2"/>
    <property type="match status" value="4"/>
</dbReference>
<dbReference type="PROSITE" id="PS50294">
    <property type="entry name" value="WD_REPEATS_REGION"/>
    <property type="match status" value="1"/>
</dbReference>
<evidence type="ECO:0000250" key="1">
    <source>
        <dbReference type="UniProtKB" id="Q05048"/>
    </source>
</evidence>
<evidence type="ECO:0000305" key="2"/>
<reference key="1">
    <citation type="journal article" date="2005" name="Science">
        <title>The transcriptional landscape of the mammalian genome.</title>
        <authorList>
            <person name="Carninci P."/>
            <person name="Kasukawa T."/>
            <person name="Katayama S."/>
            <person name="Gough J."/>
            <person name="Frith M.C."/>
            <person name="Maeda N."/>
            <person name="Oyama R."/>
            <person name="Ravasi T."/>
            <person name="Lenhard B."/>
            <person name="Wells C."/>
            <person name="Kodzius R."/>
            <person name="Shimokawa K."/>
            <person name="Bajic V.B."/>
            <person name="Brenner S.E."/>
            <person name="Batalov S."/>
            <person name="Forrest A.R."/>
            <person name="Zavolan M."/>
            <person name="Davis M.J."/>
            <person name="Wilming L.G."/>
            <person name="Aidinis V."/>
            <person name="Allen J.E."/>
            <person name="Ambesi-Impiombato A."/>
            <person name="Apweiler R."/>
            <person name="Aturaliya R.N."/>
            <person name="Bailey T.L."/>
            <person name="Bansal M."/>
            <person name="Baxter L."/>
            <person name="Beisel K.W."/>
            <person name="Bersano T."/>
            <person name="Bono H."/>
            <person name="Chalk A.M."/>
            <person name="Chiu K.P."/>
            <person name="Choudhary V."/>
            <person name="Christoffels A."/>
            <person name="Clutterbuck D.R."/>
            <person name="Crowe M.L."/>
            <person name="Dalla E."/>
            <person name="Dalrymple B.P."/>
            <person name="de Bono B."/>
            <person name="Della Gatta G."/>
            <person name="di Bernardo D."/>
            <person name="Down T."/>
            <person name="Engstrom P."/>
            <person name="Fagiolini M."/>
            <person name="Faulkner G."/>
            <person name="Fletcher C.F."/>
            <person name="Fukushima T."/>
            <person name="Furuno M."/>
            <person name="Futaki S."/>
            <person name="Gariboldi M."/>
            <person name="Georgii-Hemming P."/>
            <person name="Gingeras T.R."/>
            <person name="Gojobori T."/>
            <person name="Green R.E."/>
            <person name="Gustincich S."/>
            <person name="Harbers M."/>
            <person name="Hayashi Y."/>
            <person name="Hensch T.K."/>
            <person name="Hirokawa N."/>
            <person name="Hill D."/>
            <person name="Huminiecki L."/>
            <person name="Iacono M."/>
            <person name="Ikeo K."/>
            <person name="Iwama A."/>
            <person name="Ishikawa T."/>
            <person name="Jakt M."/>
            <person name="Kanapin A."/>
            <person name="Katoh M."/>
            <person name="Kawasawa Y."/>
            <person name="Kelso J."/>
            <person name="Kitamura H."/>
            <person name="Kitano H."/>
            <person name="Kollias G."/>
            <person name="Krishnan S.P."/>
            <person name="Kruger A."/>
            <person name="Kummerfeld S.K."/>
            <person name="Kurochkin I.V."/>
            <person name="Lareau L.F."/>
            <person name="Lazarevic D."/>
            <person name="Lipovich L."/>
            <person name="Liu J."/>
            <person name="Liuni S."/>
            <person name="McWilliam S."/>
            <person name="Madan Babu M."/>
            <person name="Madera M."/>
            <person name="Marchionni L."/>
            <person name="Matsuda H."/>
            <person name="Matsuzawa S."/>
            <person name="Miki H."/>
            <person name="Mignone F."/>
            <person name="Miyake S."/>
            <person name="Morris K."/>
            <person name="Mottagui-Tabar S."/>
            <person name="Mulder N."/>
            <person name="Nakano N."/>
            <person name="Nakauchi H."/>
            <person name="Ng P."/>
            <person name="Nilsson R."/>
            <person name="Nishiguchi S."/>
            <person name="Nishikawa S."/>
            <person name="Nori F."/>
            <person name="Ohara O."/>
            <person name="Okazaki Y."/>
            <person name="Orlando V."/>
            <person name="Pang K.C."/>
            <person name="Pavan W.J."/>
            <person name="Pavesi G."/>
            <person name="Pesole G."/>
            <person name="Petrovsky N."/>
            <person name="Piazza S."/>
            <person name="Reed J."/>
            <person name="Reid J.F."/>
            <person name="Ring B.Z."/>
            <person name="Ringwald M."/>
            <person name="Rost B."/>
            <person name="Ruan Y."/>
            <person name="Salzberg S.L."/>
            <person name="Sandelin A."/>
            <person name="Schneider C."/>
            <person name="Schoenbach C."/>
            <person name="Sekiguchi K."/>
            <person name="Semple C.A."/>
            <person name="Seno S."/>
            <person name="Sessa L."/>
            <person name="Sheng Y."/>
            <person name="Shibata Y."/>
            <person name="Shimada H."/>
            <person name="Shimada K."/>
            <person name="Silva D."/>
            <person name="Sinclair B."/>
            <person name="Sperling S."/>
            <person name="Stupka E."/>
            <person name="Sugiura K."/>
            <person name="Sultana R."/>
            <person name="Takenaka Y."/>
            <person name="Taki K."/>
            <person name="Tammoja K."/>
            <person name="Tan S.L."/>
            <person name="Tang S."/>
            <person name="Taylor M.S."/>
            <person name="Tegner J."/>
            <person name="Teichmann S.A."/>
            <person name="Ueda H.R."/>
            <person name="van Nimwegen E."/>
            <person name="Verardo R."/>
            <person name="Wei C.L."/>
            <person name="Yagi K."/>
            <person name="Yamanishi H."/>
            <person name="Zabarovsky E."/>
            <person name="Zhu S."/>
            <person name="Zimmer A."/>
            <person name="Hide W."/>
            <person name="Bult C."/>
            <person name="Grimmond S.M."/>
            <person name="Teasdale R.D."/>
            <person name="Liu E.T."/>
            <person name="Brusic V."/>
            <person name="Quackenbush J."/>
            <person name="Wahlestedt C."/>
            <person name="Mattick J.S."/>
            <person name="Hume D.A."/>
            <person name="Kai C."/>
            <person name="Sasaki D."/>
            <person name="Tomaru Y."/>
            <person name="Fukuda S."/>
            <person name="Kanamori-Katayama M."/>
            <person name="Suzuki M."/>
            <person name="Aoki J."/>
            <person name="Arakawa T."/>
            <person name="Iida J."/>
            <person name="Imamura K."/>
            <person name="Itoh M."/>
            <person name="Kato T."/>
            <person name="Kawaji H."/>
            <person name="Kawagashira N."/>
            <person name="Kawashima T."/>
            <person name="Kojima M."/>
            <person name="Kondo S."/>
            <person name="Konno H."/>
            <person name="Nakano K."/>
            <person name="Ninomiya N."/>
            <person name="Nishio T."/>
            <person name="Okada M."/>
            <person name="Plessy C."/>
            <person name="Shibata K."/>
            <person name="Shiraki T."/>
            <person name="Suzuki S."/>
            <person name="Tagami M."/>
            <person name="Waki K."/>
            <person name="Watahiki A."/>
            <person name="Okamura-Oho Y."/>
            <person name="Suzuki H."/>
            <person name="Kawai J."/>
            <person name="Hayashizaki Y."/>
        </authorList>
    </citation>
    <scope>NUCLEOTIDE SEQUENCE [LARGE SCALE MRNA]</scope>
    <source>
        <strain>C57BL/6J</strain>
        <tissue>Egg</tissue>
        <tissue>Embryo</tissue>
        <tissue>Mammary gland</tissue>
    </source>
</reference>
<reference key="2">
    <citation type="journal article" date="2004" name="Genome Res.">
        <title>The status, quality, and expansion of the NIH full-length cDNA project: the Mammalian Gene Collection (MGC).</title>
        <authorList>
            <consortium name="The MGC Project Team"/>
        </authorList>
    </citation>
    <scope>NUCLEOTIDE SEQUENCE [LARGE SCALE MRNA]</scope>
    <source>
        <strain>FVB/N</strain>
        <tissue>Mammary tumor</tissue>
    </source>
</reference>
<reference key="3">
    <citation type="journal article" date="2010" name="Cell">
        <title>A tissue-specific atlas of mouse protein phosphorylation and expression.</title>
        <authorList>
            <person name="Huttlin E.L."/>
            <person name="Jedrychowski M.P."/>
            <person name="Elias J.E."/>
            <person name="Goswami T."/>
            <person name="Rad R."/>
            <person name="Beausoleil S.A."/>
            <person name="Villen J."/>
            <person name="Haas W."/>
            <person name="Sowa M.E."/>
            <person name="Gygi S.P."/>
        </authorList>
    </citation>
    <scope>IDENTIFICATION BY MASS SPECTROMETRY [LARGE SCALE ANALYSIS]</scope>
    <source>
        <tissue>Spleen</tissue>
        <tissue>Testis</tissue>
    </source>
</reference>
<accession>Q99LC2</accession>
<accession>Q3UMB8</accession>
<accession>Q8BJW1</accession>
<accession>Q9CSU8</accession>
<sequence length="431" mass="48382">MYRTKVGLKDRQQLYKLIISQLLYDGYISIANGLINEIKPQSVCAPSEQLLHLIKLGMENDDTAVQYAIGRSDTVAPGTGIDLEFDADVQTMSPEASEYETCYVTSHKGPCRVATYSRDGQLIATGSADASIKILDTERMLAKSAMPIEVMMNETAQQNMENHPVIRTLYDHVDEVTCLAFHPTEQILASGSRDYTLKLFDYSKPSAKRAFKYIQEAEMLRSISFHPSGDFILVGTQHPTLRLYDINTFQCFVSCNPQDQHTDAICSVNYNPSANMYVTGSKDGCIKLWDGVSNRCITTFEKAHDGAEVCSAIFSKNSKYILSSGKDSVAKLWEISTGRTLVRYTGAGLSGRQVHRTQAVFNHTEDYILLPDERTISLCCWDSRTAERRNLLSLGHNNIVRCIVHSPTNPGFMTCSDDFRARFWYRRSTTD</sequence>
<protein>
    <recommendedName>
        <fullName>Cleavage stimulation factor subunit 1</fullName>
    </recommendedName>
    <alternativeName>
        <fullName>CF-1 50 kDa subunit</fullName>
    </alternativeName>
    <alternativeName>
        <fullName>Cleavage stimulation factor 50 kDa subunit</fullName>
        <shortName>CSTF 50 kDa subunit</shortName>
        <shortName>CstF-50</shortName>
    </alternativeName>
</protein>
<proteinExistence type="evidence at protein level"/>
<comment type="function">
    <text evidence="1">One of the multiple factors required for polyadenylation and 3'-end cleavage of mammalian pre-mRNAs (By similarity). May be responsible for the interaction of CSTF with other factors to form a stable complex on the pre-mRNA (By similarity).</text>
</comment>
<comment type="subunit">
    <text evidence="1">Homodimer (By similarity). The CSTF complex is composed of CSTF1 (50 kDa subunit), CSTF2 (64 kDa subunit) and CSTF3 (77 kDa subunit) (By similarity). Interacts (via repeats WD) directly with CSTF3 (By similarity). Interacts (via repeat WD6) with BARD1 (By similarity). Interacts with ERCC6 (By similarity).</text>
</comment>
<comment type="subcellular location">
    <subcellularLocation>
        <location evidence="1">Nucleus</location>
    </subcellularLocation>
</comment>
<comment type="domain">
    <text evidence="1">N-terminus mediates homodimerization.</text>
</comment>
<comment type="sequence caution" evidence="2">
    <conflict type="frameshift">
        <sequence resource="EMBL-CDS" id="BAB27929"/>
    </conflict>
</comment>
<feature type="chain" id="PRO_0000050945" description="Cleavage stimulation factor subunit 1">
    <location>
        <begin position="1"/>
        <end position="431"/>
    </location>
</feature>
<feature type="repeat" description="WD 1">
    <location>
        <begin position="106"/>
        <end position="145"/>
    </location>
</feature>
<feature type="repeat" description="WD 2">
    <location>
        <begin position="171"/>
        <end position="210"/>
    </location>
</feature>
<feature type="repeat" description="WD 3">
    <location>
        <begin position="215"/>
        <end position="254"/>
    </location>
</feature>
<feature type="repeat" description="WD 4">
    <location>
        <begin position="260"/>
        <end position="301"/>
    </location>
</feature>
<feature type="repeat" description="WD 5">
    <location>
        <begin position="303"/>
        <end position="343"/>
    </location>
</feature>
<feature type="repeat" description="WD 6">
    <location>
        <begin position="395"/>
        <end position="431"/>
    </location>
</feature>